<sequence>MPNVVIIGAQWGDEGKGKIVDLLTRDTDYVVRFQGGNNAGHTVIVDGKTYILHLIPSGILHKEKICIIGNGVVLDPQIFIQELDTLLSQGIDVSPNRLKLSTKTHLIMPYHKLLDQVRENASTTQKIGTTGRGIGPCYEDKVSRIGIRTIDLTQPKLLYKKIELALKEKNTLFTQLYNTEFVNAETIFNEVMETASRILPYLSDTSSILQDAFIKNKKVIFEGAQGVHLDIDHGTYPFVTSSNTIAANASIGSGIALSSTEKIIGIVKAYTTRVGSGPFPTELYDNTGKFLQEKGHEYGATTGRPRRCGWQDLVMLKDSVRLNGFTELALTKLDVLSGLKKINICTSYAYQGESVTYPPQDEHILFNEIKPIYETMPGWEHSLESCTSWNQLPQCAKNYIERIEQVVGVPITIISVGADRNQTLFRDI</sequence>
<name>PURA_LAWIP</name>
<organism>
    <name type="scientific">Lawsonia intracellularis (strain PHE/MN1-00)</name>
    <dbReference type="NCBI Taxonomy" id="363253"/>
    <lineage>
        <taxon>Bacteria</taxon>
        <taxon>Pseudomonadati</taxon>
        <taxon>Thermodesulfobacteriota</taxon>
        <taxon>Desulfovibrionia</taxon>
        <taxon>Desulfovibrionales</taxon>
        <taxon>Desulfovibrionaceae</taxon>
        <taxon>Lawsonia</taxon>
    </lineage>
</organism>
<protein>
    <recommendedName>
        <fullName evidence="1">Adenylosuccinate synthetase</fullName>
        <shortName evidence="1">AMPSase</shortName>
        <shortName evidence="1">AdSS</shortName>
        <ecNumber evidence="1">6.3.4.4</ecNumber>
    </recommendedName>
    <alternativeName>
        <fullName evidence="1">IMP--aspartate ligase</fullName>
    </alternativeName>
</protein>
<keyword id="KW-0963">Cytoplasm</keyword>
<keyword id="KW-0342">GTP-binding</keyword>
<keyword id="KW-0436">Ligase</keyword>
<keyword id="KW-0460">Magnesium</keyword>
<keyword id="KW-0479">Metal-binding</keyword>
<keyword id="KW-0547">Nucleotide-binding</keyword>
<keyword id="KW-0658">Purine biosynthesis</keyword>
<keyword id="KW-1185">Reference proteome</keyword>
<proteinExistence type="inferred from homology"/>
<comment type="function">
    <text evidence="1">Plays an important role in the de novo pathway of purine nucleotide biosynthesis. Catalyzes the first committed step in the biosynthesis of AMP from IMP.</text>
</comment>
<comment type="catalytic activity">
    <reaction evidence="1">
        <text>IMP + L-aspartate + GTP = N(6)-(1,2-dicarboxyethyl)-AMP + GDP + phosphate + 2 H(+)</text>
        <dbReference type="Rhea" id="RHEA:15753"/>
        <dbReference type="ChEBI" id="CHEBI:15378"/>
        <dbReference type="ChEBI" id="CHEBI:29991"/>
        <dbReference type="ChEBI" id="CHEBI:37565"/>
        <dbReference type="ChEBI" id="CHEBI:43474"/>
        <dbReference type="ChEBI" id="CHEBI:57567"/>
        <dbReference type="ChEBI" id="CHEBI:58053"/>
        <dbReference type="ChEBI" id="CHEBI:58189"/>
        <dbReference type="EC" id="6.3.4.4"/>
    </reaction>
</comment>
<comment type="cofactor">
    <cofactor evidence="1">
        <name>Mg(2+)</name>
        <dbReference type="ChEBI" id="CHEBI:18420"/>
    </cofactor>
    <text evidence="1">Binds 1 Mg(2+) ion per subunit.</text>
</comment>
<comment type="pathway">
    <text evidence="1">Purine metabolism; AMP biosynthesis via de novo pathway; AMP from IMP: step 1/2.</text>
</comment>
<comment type="subunit">
    <text evidence="1">Homodimer.</text>
</comment>
<comment type="subcellular location">
    <subcellularLocation>
        <location evidence="1">Cytoplasm</location>
    </subcellularLocation>
</comment>
<comment type="similarity">
    <text evidence="1">Belongs to the adenylosuccinate synthetase family.</text>
</comment>
<evidence type="ECO:0000255" key="1">
    <source>
        <dbReference type="HAMAP-Rule" id="MF_00011"/>
    </source>
</evidence>
<feature type="chain" id="PRO_1000000848" description="Adenylosuccinate synthetase">
    <location>
        <begin position="1"/>
        <end position="428"/>
    </location>
</feature>
<feature type="active site" description="Proton acceptor" evidence="1">
    <location>
        <position position="13"/>
    </location>
</feature>
<feature type="active site" description="Proton donor" evidence="1">
    <location>
        <position position="41"/>
    </location>
</feature>
<feature type="binding site" evidence="1">
    <location>
        <begin position="12"/>
        <end position="18"/>
    </location>
    <ligand>
        <name>GTP</name>
        <dbReference type="ChEBI" id="CHEBI:37565"/>
    </ligand>
</feature>
<feature type="binding site" description="in other chain" evidence="1">
    <location>
        <begin position="13"/>
        <end position="16"/>
    </location>
    <ligand>
        <name>IMP</name>
        <dbReference type="ChEBI" id="CHEBI:58053"/>
        <note>ligand shared between dimeric partners</note>
    </ligand>
</feature>
<feature type="binding site" evidence="1">
    <location>
        <position position="13"/>
    </location>
    <ligand>
        <name>Mg(2+)</name>
        <dbReference type="ChEBI" id="CHEBI:18420"/>
    </ligand>
</feature>
<feature type="binding site" description="in other chain" evidence="1">
    <location>
        <begin position="38"/>
        <end position="41"/>
    </location>
    <ligand>
        <name>IMP</name>
        <dbReference type="ChEBI" id="CHEBI:58053"/>
        <note>ligand shared between dimeric partners</note>
    </ligand>
</feature>
<feature type="binding site" evidence="1">
    <location>
        <begin position="40"/>
        <end position="42"/>
    </location>
    <ligand>
        <name>GTP</name>
        <dbReference type="ChEBI" id="CHEBI:37565"/>
    </ligand>
</feature>
<feature type="binding site" evidence="1">
    <location>
        <position position="40"/>
    </location>
    <ligand>
        <name>Mg(2+)</name>
        <dbReference type="ChEBI" id="CHEBI:18420"/>
    </ligand>
</feature>
<feature type="binding site" description="in other chain" evidence="1">
    <location>
        <position position="130"/>
    </location>
    <ligand>
        <name>IMP</name>
        <dbReference type="ChEBI" id="CHEBI:58053"/>
        <note>ligand shared between dimeric partners</note>
    </ligand>
</feature>
<feature type="binding site" evidence="1">
    <location>
        <position position="144"/>
    </location>
    <ligand>
        <name>IMP</name>
        <dbReference type="ChEBI" id="CHEBI:58053"/>
        <note>ligand shared between dimeric partners</note>
    </ligand>
</feature>
<feature type="binding site" description="in other chain" evidence="1">
    <location>
        <position position="225"/>
    </location>
    <ligand>
        <name>IMP</name>
        <dbReference type="ChEBI" id="CHEBI:58053"/>
        <note>ligand shared between dimeric partners</note>
    </ligand>
</feature>
<feature type="binding site" description="in other chain" evidence="1">
    <location>
        <position position="240"/>
    </location>
    <ligand>
        <name>IMP</name>
        <dbReference type="ChEBI" id="CHEBI:58053"/>
        <note>ligand shared between dimeric partners</note>
    </ligand>
</feature>
<feature type="binding site" evidence="1">
    <location>
        <begin position="300"/>
        <end position="306"/>
    </location>
    <ligand>
        <name>substrate</name>
    </ligand>
</feature>
<feature type="binding site" description="in other chain" evidence="1">
    <location>
        <position position="304"/>
    </location>
    <ligand>
        <name>IMP</name>
        <dbReference type="ChEBI" id="CHEBI:58053"/>
        <note>ligand shared between dimeric partners</note>
    </ligand>
</feature>
<feature type="binding site" evidence="1">
    <location>
        <position position="306"/>
    </location>
    <ligand>
        <name>GTP</name>
        <dbReference type="ChEBI" id="CHEBI:37565"/>
    </ligand>
</feature>
<feature type="binding site" evidence="1">
    <location>
        <begin position="332"/>
        <end position="334"/>
    </location>
    <ligand>
        <name>GTP</name>
        <dbReference type="ChEBI" id="CHEBI:37565"/>
    </ligand>
</feature>
<feature type="binding site" evidence="1">
    <location>
        <begin position="415"/>
        <end position="417"/>
    </location>
    <ligand>
        <name>GTP</name>
        <dbReference type="ChEBI" id="CHEBI:37565"/>
    </ligand>
</feature>
<accession>Q1MRW8</accession>
<reference key="1">
    <citation type="submission" date="2005-11" db="EMBL/GenBank/DDBJ databases">
        <title>The complete genome sequence of Lawsonia intracellularis: the causative agent of proliferative enteropathy.</title>
        <authorList>
            <person name="Kaur K."/>
            <person name="Zhang Q."/>
            <person name="Beckler D."/>
            <person name="Munir S."/>
            <person name="Li L."/>
            <person name="Kinsley K."/>
            <person name="Herron L."/>
            <person name="Peterson A."/>
            <person name="May B."/>
            <person name="Singh S."/>
            <person name="Gebhart C."/>
            <person name="Kapur V."/>
        </authorList>
    </citation>
    <scope>NUCLEOTIDE SEQUENCE [LARGE SCALE GENOMIC DNA]</scope>
    <source>
        <strain>PHE/MN1-00</strain>
    </source>
</reference>
<gene>
    <name evidence="1" type="primary">purA</name>
    <name type="ordered locus">LI0202</name>
</gene>
<dbReference type="EC" id="6.3.4.4" evidence="1"/>
<dbReference type="EMBL" id="AM180252">
    <property type="protein sequence ID" value="CAJ54258.1"/>
    <property type="molecule type" value="Genomic_DNA"/>
</dbReference>
<dbReference type="RefSeq" id="WP_011526284.1">
    <property type="nucleotide sequence ID" value="NC_008011.1"/>
</dbReference>
<dbReference type="SMR" id="Q1MRW8"/>
<dbReference type="STRING" id="363253.LI0202"/>
<dbReference type="KEGG" id="lip:LI0202"/>
<dbReference type="eggNOG" id="COG0104">
    <property type="taxonomic scope" value="Bacteria"/>
</dbReference>
<dbReference type="HOGENOM" id="CLU_029848_0_0_7"/>
<dbReference type="OrthoDB" id="9807553at2"/>
<dbReference type="UniPathway" id="UPA00075">
    <property type="reaction ID" value="UER00335"/>
</dbReference>
<dbReference type="Proteomes" id="UP000002430">
    <property type="component" value="Chromosome"/>
</dbReference>
<dbReference type="GO" id="GO:0005737">
    <property type="term" value="C:cytoplasm"/>
    <property type="evidence" value="ECO:0007669"/>
    <property type="project" value="UniProtKB-SubCell"/>
</dbReference>
<dbReference type="GO" id="GO:0004019">
    <property type="term" value="F:adenylosuccinate synthase activity"/>
    <property type="evidence" value="ECO:0007669"/>
    <property type="project" value="UniProtKB-UniRule"/>
</dbReference>
<dbReference type="GO" id="GO:0005525">
    <property type="term" value="F:GTP binding"/>
    <property type="evidence" value="ECO:0007669"/>
    <property type="project" value="UniProtKB-UniRule"/>
</dbReference>
<dbReference type="GO" id="GO:0000287">
    <property type="term" value="F:magnesium ion binding"/>
    <property type="evidence" value="ECO:0007669"/>
    <property type="project" value="UniProtKB-UniRule"/>
</dbReference>
<dbReference type="GO" id="GO:0044208">
    <property type="term" value="P:'de novo' AMP biosynthetic process"/>
    <property type="evidence" value="ECO:0007669"/>
    <property type="project" value="UniProtKB-UniRule"/>
</dbReference>
<dbReference type="GO" id="GO:0046040">
    <property type="term" value="P:IMP metabolic process"/>
    <property type="evidence" value="ECO:0007669"/>
    <property type="project" value="TreeGrafter"/>
</dbReference>
<dbReference type="CDD" id="cd03108">
    <property type="entry name" value="AdSS"/>
    <property type="match status" value="1"/>
</dbReference>
<dbReference type="FunFam" id="1.10.300.10:FF:000001">
    <property type="entry name" value="Adenylosuccinate synthetase"/>
    <property type="match status" value="1"/>
</dbReference>
<dbReference type="FunFam" id="3.90.170.10:FF:000001">
    <property type="entry name" value="Adenylosuccinate synthetase"/>
    <property type="match status" value="1"/>
</dbReference>
<dbReference type="Gene3D" id="3.40.440.10">
    <property type="entry name" value="Adenylosuccinate Synthetase, subunit A, domain 1"/>
    <property type="match status" value="1"/>
</dbReference>
<dbReference type="Gene3D" id="1.10.300.10">
    <property type="entry name" value="Adenylosuccinate Synthetase, subunit A, domain 2"/>
    <property type="match status" value="1"/>
</dbReference>
<dbReference type="Gene3D" id="3.90.170.10">
    <property type="entry name" value="Adenylosuccinate Synthetase, subunit A, domain 3"/>
    <property type="match status" value="1"/>
</dbReference>
<dbReference type="HAMAP" id="MF_00011">
    <property type="entry name" value="Adenylosucc_synth"/>
    <property type="match status" value="1"/>
</dbReference>
<dbReference type="InterPro" id="IPR018220">
    <property type="entry name" value="Adenylosuccin_syn_GTP-bd"/>
</dbReference>
<dbReference type="InterPro" id="IPR033128">
    <property type="entry name" value="Adenylosuccin_syn_Lys_AS"/>
</dbReference>
<dbReference type="InterPro" id="IPR042109">
    <property type="entry name" value="Adenylosuccinate_synth_dom1"/>
</dbReference>
<dbReference type="InterPro" id="IPR042110">
    <property type="entry name" value="Adenylosuccinate_synth_dom2"/>
</dbReference>
<dbReference type="InterPro" id="IPR042111">
    <property type="entry name" value="Adenylosuccinate_synth_dom3"/>
</dbReference>
<dbReference type="InterPro" id="IPR001114">
    <property type="entry name" value="Adenylosuccinate_synthetase"/>
</dbReference>
<dbReference type="InterPro" id="IPR027417">
    <property type="entry name" value="P-loop_NTPase"/>
</dbReference>
<dbReference type="NCBIfam" id="NF002223">
    <property type="entry name" value="PRK01117.1"/>
    <property type="match status" value="1"/>
</dbReference>
<dbReference type="NCBIfam" id="TIGR00184">
    <property type="entry name" value="purA"/>
    <property type="match status" value="1"/>
</dbReference>
<dbReference type="PANTHER" id="PTHR11846">
    <property type="entry name" value="ADENYLOSUCCINATE SYNTHETASE"/>
    <property type="match status" value="1"/>
</dbReference>
<dbReference type="PANTHER" id="PTHR11846:SF0">
    <property type="entry name" value="ADENYLOSUCCINATE SYNTHETASE"/>
    <property type="match status" value="1"/>
</dbReference>
<dbReference type="Pfam" id="PF00709">
    <property type="entry name" value="Adenylsucc_synt"/>
    <property type="match status" value="1"/>
</dbReference>
<dbReference type="SMART" id="SM00788">
    <property type="entry name" value="Adenylsucc_synt"/>
    <property type="match status" value="1"/>
</dbReference>
<dbReference type="SUPFAM" id="SSF52540">
    <property type="entry name" value="P-loop containing nucleoside triphosphate hydrolases"/>
    <property type="match status" value="1"/>
</dbReference>
<dbReference type="PROSITE" id="PS01266">
    <property type="entry name" value="ADENYLOSUCCIN_SYN_1"/>
    <property type="match status" value="1"/>
</dbReference>
<dbReference type="PROSITE" id="PS00513">
    <property type="entry name" value="ADENYLOSUCCIN_SYN_2"/>
    <property type="match status" value="1"/>
</dbReference>